<evidence type="ECO:0000250" key="1"/>
<evidence type="ECO:0000305" key="2"/>
<feature type="chain" id="PRO_0000372776" description="Defense protein 2">
    <location>
        <begin position="1" status="less than"/>
        <end position="113"/>
    </location>
</feature>
<feature type="non-terminal residue">
    <location>
        <position position="1"/>
    </location>
</feature>
<dbReference type="EMBL" id="AY829737">
    <property type="protein sequence ID" value="AAV91351.1"/>
    <property type="molecule type" value="mRNA"/>
</dbReference>
<dbReference type="GO" id="GO:0005576">
    <property type="term" value="C:extracellular region"/>
    <property type="evidence" value="ECO:0007669"/>
    <property type="project" value="UniProtKB-SubCell"/>
</dbReference>
<dbReference type="GO" id="GO:0042742">
    <property type="term" value="P:defense response to bacterium"/>
    <property type="evidence" value="ECO:0007669"/>
    <property type="project" value="UniProtKB-KW"/>
</dbReference>
<dbReference type="GO" id="GO:0045087">
    <property type="term" value="P:innate immune response"/>
    <property type="evidence" value="ECO:0007669"/>
    <property type="project" value="UniProtKB-KW"/>
</dbReference>
<dbReference type="InterPro" id="IPR005521">
    <property type="entry name" value="Attacin_C"/>
</dbReference>
<dbReference type="Pfam" id="PF03769">
    <property type="entry name" value="Attacin_C"/>
    <property type="match status" value="1"/>
</dbReference>
<name>DFP2_LONON</name>
<protein>
    <recommendedName>
        <fullName>Defense protein 2</fullName>
        <shortName>DFP-2</shortName>
    </recommendedName>
</protein>
<reference key="1">
    <citation type="journal article" date="2005" name="Gene">
        <title>A catalog for the transcripts from the venomous structures of the caterpillar Lonomia obliqua: identification of the proteins potentially involved in the coagulation disorder and hemorrhagic syndrome.</title>
        <authorList>
            <person name="Veiga A.B.G."/>
            <person name="Ribeiro J.M.C."/>
            <person name="Guimaraes J.A."/>
            <person name="Francischetti I.M.B."/>
        </authorList>
    </citation>
    <scope>NUCLEOTIDE SEQUENCE [LARGE SCALE MRNA]</scope>
    <source>
        <tissue>Tegument</tissue>
    </source>
</reference>
<accession>Q5MGP9</accession>
<organism>
    <name type="scientific">Lonomia obliqua</name>
    <name type="common">Moth</name>
    <dbReference type="NCBI Taxonomy" id="304329"/>
    <lineage>
        <taxon>Eukaryota</taxon>
        <taxon>Metazoa</taxon>
        <taxon>Ecdysozoa</taxon>
        <taxon>Arthropoda</taxon>
        <taxon>Hexapoda</taxon>
        <taxon>Insecta</taxon>
        <taxon>Pterygota</taxon>
        <taxon>Neoptera</taxon>
        <taxon>Endopterygota</taxon>
        <taxon>Lepidoptera</taxon>
        <taxon>Glossata</taxon>
        <taxon>Ditrysia</taxon>
        <taxon>Bombycoidea</taxon>
        <taxon>Saturniidae</taxon>
        <taxon>Hemileucinae</taxon>
        <taxon>Lonomia</taxon>
    </lineage>
</organism>
<sequence length="113" mass="12430">TGSGKYNILHNDNHNLDLTGKFLECSRSNPNLSDYNKYSAILDYLYKDKLSASLGVAHSGLLDRTDLSALGKVNLLNDKNTRLDLFGGLTKSMSPKFDSGLKPNFGLQLESSF</sequence>
<proteinExistence type="evidence at transcript level"/>
<comment type="function">
    <text evidence="1">Has antibacterial activity against both Gram-positive and Gram-negative bacteria.</text>
</comment>
<comment type="subcellular location">
    <subcellularLocation>
        <location evidence="1">Secreted</location>
    </subcellularLocation>
</comment>
<comment type="similarity">
    <text evidence="2">Belongs to the attacin/sarcotoxin-2 family.</text>
</comment>
<keyword id="KW-0044">Antibiotic</keyword>
<keyword id="KW-0929">Antimicrobial</keyword>
<keyword id="KW-0391">Immunity</keyword>
<keyword id="KW-0399">Innate immunity</keyword>
<keyword id="KW-0964">Secreted</keyword>